<sequence>MLQAIYNETKDLMQKSIQALSRDFSTLRSAKVSVNILDHIKVDYYGTPTALNQVGSVMSLDATTLQISPWEKNLLKEIERSIQEANIGVNPNNDGETIKLFFPPMTTEQRKLIAKDAKAMGEKAKVAVRNTRQDANNKVKKLEKDKEISEDESKKAQEQIQKITDEAIKKIDESVKNKEDAILKV</sequence>
<comment type="function">
    <text evidence="1">Responsible for the release of ribosomes from messenger RNA at the termination of protein biosynthesis. May increase the efficiency of translation by recycling ribosomes from one round of translation to another.</text>
</comment>
<comment type="subcellular location">
    <subcellularLocation>
        <location evidence="1">Cytoplasm</location>
    </subcellularLocation>
</comment>
<comment type="similarity">
    <text evidence="1">Belongs to the RRF family.</text>
</comment>
<reference key="1">
    <citation type="journal article" date="2009" name="J. Bacteriol.">
        <title>The complete genome sequence of Helicobacter pylori strain G27.</title>
        <authorList>
            <person name="Baltrus D.A."/>
            <person name="Amieva M.R."/>
            <person name="Covacci A."/>
            <person name="Lowe T.M."/>
            <person name="Merrell D.S."/>
            <person name="Ottemann K.M."/>
            <person name="Stein M."/>
            <person name="Salama N.R."/>
            <person name="Guillemin K."/>
        </authorList>
    </citation>
    <scope>NUCLEOTIDE SEQUENCE [LARGE SCALE GENOMIC DNA]</scope>
    <source>
        <strain>G27</strain>
    </source>
</reference>
<keyword id="KW-0963">Cytoplasm</keyword>
<keyword id="KW-0648">Protein biosynthesis</keyword>
<keyword id="KW-1185">Reference proteome</keyword>
<protein>
    <recommendedName>
        <fullName evidence="1">Ribosome-recycling factor</fullName>
        <shortName evidence="1">RRF</shortName>
    </recommendedName>
    <alternativeName>
        <fullName evidence="1">Ribosome-releasing factor</fullName>
    </alternativeName>
</protein>
<organism>
    <name type="scientific">Helicobacter pylori (strain G27)</name>
    <dbReference type="NCBI Taxonomy" id="563041"/>
    <lineage>
        <taxon>Bacteria</taxon>
        <taxon>Pseudomonadati</taxon>
        <taxon>Campylobacterota</taxon>
        <taxon>Epsilonproteobacteria</taxon>
        <taxon>Campylobacterales</taxon>
        <taxon>Helicobacteraceae</taxon>
        <taxon>Helicobacter</taxon>
    </lineage>
</organism>
<evidence type="ECO:0000255" key="1">
    <source>
        <dbReference type="HAMAP-Rule" id="MF_00040"/>
    </source>
</evidence>
<evidence type="ECO:0000256" key="2">
    <source>
        <dbReference type="SAM" id="MobiDB-lite"/>
    </source>
</evidence>
<name>RRF_HELPG</name>
<accession>B5Z8Q1</accession>
<dbReference type="EMBL" id="CP001173">
    <property type="protein sequence ID" value="ACI27950.1"/>
    <property type="molecule type" value="Genomic_DNA"/>
</dbReference>
<dbReference type="RefSeq" id="WP_000938360.1">
    <property type="nucleotide sequence ID" value="NC_011333.1"/>
</dbReference>
<dbReference type="SMR" id="B5Z8Q1"/>
<dbReference type="KEGG" id="hpg:HPG27_1201"/>
<dbReference type="HOGENOM" id="CLU_073981_2_0_7"/>
<dbReference type="Proteomes" id="UP000001735">
    <property type="component" value="Chromosome"/>
</dbReference>
<dbReference type="GO" id="GO:0005829">
    <property type="term" value="C:cytosol"/>
    <property type="evidence" value="ECO:0007669"/>
    <property type="project" value="GOC"/>
</dbReference>
<dbReference type="GO" id="GO:0043023">
    <property type="term" value="F:ribosomal large subunit binding"/>
    <property type="evidence" value="ECO:0007669"/>
    <property type="project" value="TreeGrafter"/>
</dbReference>
<dbReference type="GO" id="GO:0002184">
    <property type="term" value="P:cytoplasmic translational termination"/>
    <property type="evidence" value="ECO:0007669"/>
    <property type="project" value="TreeGrafter"/>
</dbReference>
<dbReference type="CDD" id="cd00520">
    <property type="entry name" value="RRF"/>
    <property type="match status" value="1"/>
</dbReference>
<dbReference type="FunFam" id="1.10.132.20:FF:000001">
    <property type="entry name" value="Ribosome-recycling factor"/>
    <property type="match status" value="1"/>
</dbReference>
<dbReference type="FunFam" id="3.30.1360.40:FF:000001">
    <property type="entry name" value="Ribosome-recycling factor"/>
    <property type="match status" value="1"/>
</dbReference>
<dbReference type="Gene3D" id="3.30.1360.40">
    <property type="match status" value="1"/>
</dbReference>
<dbReference type="Gene3D" id="1.10.132.20">
    <property type="entry name" value="Ribosome-recycling factor"/>
    <property type="match status" value="1"/>
</dbReference>
<dbReference type="HAMAP" id="MF_00040">
    <property type="entry name" value="RRF"/>
    <property type="match status" value="1"/>
</dbReference>
<dbReference type="InterPro" id="IPR002661">
    <property type="entry name" value="Ribosome_recyc_fac"/>
</dbReference>
<dbReference type="InterPro" id="IPR023584">
    <property type="entry name" value="Ribosome_recyc_fac_dom"/>
</dbReference>
<dbReference type="InterPro" id="IPR036191">
    <property type="entry name" value="RRF_sf"/>
</dbReference>
<dbReference type="NCBIfam" id="TIGR00496">
    <property type="entry name" value="frr"/>
    <property type="match status" value="1"/>
</dbReference>
<dbReference type="PANTHER" id="PTHR20982:SF3">
    <property type="entry name" value="MITOCHONDRIAL RIBOSOME RECYCLING FACTOR PSEUDO 1"/>
    <property type="match status" value="1"/>
</dbReference>
<dbReference type="PANTHER" id="PTHR20982">
    <property type="entry name" value="RIBOSOME RECYCLING FACTOR"/>
    <property type="match status" value="1"/>
</dbReference>
<dbReference type="Pfam" id="PF01765">
    <property type="entry name" value="RRF"/>
    <property type="match status" value="1"/>
</dbReference>
<dbReference type="SUPFAM" id="SSF55194">
    <property type="entry name" value="Ribosome recycling factor, RRF"/>
    <property type="match status" value="1"/>
</dbReference>
<proteinExistence type="inferred from homology"/>
<feature type="chain" id="PRO_1000090749" description="Ribosome-recycling factor">
    <location>
        <begin position="1"/>
        <end position="185"/>
    </location>
</feature>
<feature type="region of interest" description="Disordered" evidence="2">
    <location>
        <begin position="127"/>
        <end position="158"/>
    </location>
</feature>
<gene>
    <name evidence="1" type="primary">frr</name>
    <name type="ordered locus">HPG27_1201</name>
</gene>